<keyword id="KW-0378">Hydrolase</keyword>
<keyword id="KW-0442">Lipid degradation</keyword>
<keyword id="KW-0443">Lipid metabolism</keyword>
<keyword id="KW-1185">Reference proteome</keyword>
<organism>
    <name type="scientific">Escherichia coli (strain K12)</name>
    <dbReference type="NCBI Taxonomy" id="83333"/>
    <lineage>
        <taxon>Bacteria</taxon>
        <taxon>Pseudomonadati</taxon>
        <taxon>Pseudomonadota</taxon>
        <taxon>Gammaproteobacteria</taxon>
        <taxon>Enterobacterales</taxon>
        <taxon>Enterobacteriaceae</taxon>
        <taxon>Escherichia</taxon>
    </lineage>
</organism>
<gene>
    <name type="primary">yjjU</name>
    <name type="ordered locus">b4377</name>
    <name type="ordered locus">JW4340</name>
</gene>
<proteinExistence type="inferred from homology"/>
<feature type="chain" id="PRO_0000169816" description="Uncharacterized protein YjjU">
    <location>
        <begin position="1"/>
        <end position="357"/>
    </location>
</feature>
<feature type="domain" description="PNPLA" evidence="2">
    <location>
        <begin position="27"/>
        <end position="196"/>
    </location>
</feature>
<feature type="short sequence motif" description="GXGXXG" evidence="2">
    <location>
        <begin position="31"/>
        <end position="36"/>
    </location>
</feature>
<feature type="short sequence motif" description="GXSXG" evidence="2">
    <location>
        <begin position="59"/>
        <end position="63"/>
    </location>
</feature>
<feature type="short sequence motif" description="DGA/G" evidence="2">
    <location>
        <begin position="183"/>
        <end position="185"/>
    </location>
</feature>
<feature type="active site" description="Nucleophile" evidence="2">
    <location>
        <position position="61"/>
    </location>
</feature>
<feature type="active site" description="Proton acceptor" evidence="2">
    <location>
        <position position="183"/>
    </location>
</feature>
<protein>
    <recommendedName>
        <fullName>Uncharacterized protein YjjU</fullName>
        <ecNumber>3.1.1.-</ecNumber>
    </recommendedName>
</protein>
<evidence type="ECO:0000250" key="1"/>
<evidence type="ECO:0000255" key="2">
    <source>
        <dbReference type="PROSITE-ProRule" id="PRU01161"/>
    </source>
</evidence>
<accession>P39407</accession>
<accession>Q2M5U0</accession>
<name>YJJU_ECOLI</name>
<reference key="1">
    <citation type="journal article" date="1995" name="Nucleic Acids Res.">
        <title>Analysis of the Escherichia coli genome VI: DNA sequence of the region from 92.8 through 100 minutes.</title>
        <authorList>
            <person name="Burland V.D."/>
            <person name="Plunkett G. III"/>
            <person name="Sofia H.J."/>
            <person name="Daniels D.L."/>
            <person name="Blattner F.R."/>
        </authorList>
    </citation>
    <scope>NUCLEOTIDE SEQUENCE [LARGE SCALE GENOMIC DNA]</scope>
    <source>
        <strain>K12 / MG1655 / ATCC 47076</strain>
    </source>
</reference>
<reference key="2">
    <citation type="journal article" date="1997" name="Science">
        <title>The complete genome sequence of Escherichia coli K-12.</title>
        <authorList>
            <person name="Blattner F.R."/>
            <person name="Plunkett G. III"/>
            <person name="Bloch C.A."/>
            <person name="Perna N.T."/>
            <person name="Burland V."/>
            <person name="Riley M."/>
            <person name="Collado-Vides J."/>
            <person name="Glasner J.D."/>
            <person name="Rode C.K."/>
            <person name="Mayhew G.F."/>
            <person name="Gregor J."/>
            <person name="Davis N.W."/>
            <person name="Kirkpatrick H.A."/>
            <person name="Goeden M.A."/>
            <person name="Rose D.J."/>
            <person name="Mau B."/>
            <person name="Shao Y."/>
        </authorList>
    </citation>
    <scope>NUCLEOTIDE SEQUENCE [LARGE SCALE GENOMIC DNA]</scope>
    <source>
        <strain>K12 / MG1655 / ATCC 47076</strain>
    </source>
</reference>
<reference key="3">
    <citation type="journal article" date="2006" name="Mol. Syst. Biol.">
        <title>Highly accurate genome sequences of Escherichia coli K-12 strains MG1655 and W3110.</title>
        <authorList>
            <person name="Hayashi K."/>
            <person name="Morooka N."/>
            <person name="Yamamoto Y."/>
            <person name="Fujita K."/>
            <person name="Isono K."/>
            <person name="Choi S."/>
            <person name="Ohtsubo E."/>
            <person name="Baba T."/>
            <person name="Wanner B.L."/>
            <person name="Mori H."/>
            <person name="Horiuchi T."/>
        </authorList>
    </citation>
    <scope>NUCLEOTIDE SEQUENCE [LARGE SCALE GENOMIC DNA]</scope>
    <source>
        <strain>K12 / W3110 / ATCC 27325 / DSM 5911</strain>
    </source>
</reference>
<sequence>MGQRIPVTLGNIAPLSLRPFQPGRIALVCEGGGQRGIFTAGVLDEFMRAQFNPFDLYLGTSAGAQNLSAFICNQPGYARKVIMRYTTKREFFDPLRFVRGGNLIDLDWLVEATASQMPLQMDTAARLFDSGKSFYMCACRQDDYAPNYFLPTKQNWLDVIRASSAIPGFYRSGVSLEGINYLDGGISDAIPVKEAARQGAKTLVVIRTVPSQMYYTPQWFKRMERWLGDSSLQPLVNLVQHHETSYRDIQQFIEKPPGKLRIFEIYPPKPLHSIALGSRIPALREDYKLGRLCGRYFLATVGKLLTEKAPLTRHLVPVVTPESIVIPPAPVANDTLVAEVSDAPQANDPTFNNEDLA</sequence>
<comment type="function">
    <text evidence="1">Probable lipid hydrolase.</text>
</comment>
<dbReference type="EC" id="3.1.1.-"/>
<dbReference type="EMBL" id="U14003">
    <property type="protein sequence ID" value="AAA97273.1"/>
    <property type="molecule type" value="Genomic_DNA"/>
</dbReference>
<dbReference type="EMBL" id="U00096">
    <property type="protein sequence ID" value="AAC77330.1"/>
    <property type="molecule type" value="Genomic_DNA"/>
</dbReference>
<dbReference type="EMBL" id="AP009048">
    <property type="protein sequence ID" value="BAE78366.1"/>
    <property type="molecule type" value="Genomic_DNA"/>
</dbReference>
<dbReference type="PIR" id="S56601">
    <property type="entry name" value="S56601"/>
</dbReference>
<dbReference type="RefSeq" id="NP_418794.1">
    <property type="nucleotide sequence ID" value="NC_000913.3"/>
</dbReference>
<dbReference type="RefSeq" id="WP_001299799.1">
    <property type="nucleotide sequence ID" value="NZ_STEB01000033.1"/>
</dbReference>
<dbReference type="SMR" id="P39407"/>
<dbReference type="BioGRID" id="4261643">
    <property type="interactions" value="28"/>
</dbReference>
<dbReference type="BioGRID" id="853183">
    <property type="interactions" value="1"/>
</dbReference>
<dbReference type="DIP" id="DIP-6892N"/>
<dbReference type="FunCoup" id="P39407">
    <property type="interactions" value="65"/>
</dbReference>
<dbReference type="IntAct" id="P39407">
    <property type="interactions" value="11"/>
</dbReference>
<dbReference type="STRING" id="511145.b4377"/>
<dbReference type="jPOST" id="P39407"/>
<dbReference type="PaxDb" id="511145-b4377"/>
<dbReference type="EnsemblBacteria" id="AAC77330">
    <property type="protein sequence ID" value="AAC77330"/>
    <property type="gene ID" value="b4377"/>
</dbReference>
<dbReference type="GeneID" id="948906"/>
<dbReference type="KEGG" id="ecj:JW4340"/>
<dbReference type="KEGG" id="eco:b4377"/>
<dbReference type="KEGG" id="ecoc:C3026_23650"/>
<dbReference type="PATRIC" id="fig|1411691.4.peg.2310"/>
<dbReference type="EchoBASE" id="EB2482"/>
<dbReference type="eggNOG" id="COG4667">
    <property type="taxonomic scope" value="Bacteria"/>
</dbReference>
<dbReference type="HOGENOM" id="CLU_048271_0_1_6"/>
<dbReference type="InParanoid" id="P39407"/>
<dbReference type="OMA" id="HIVDLDW"/>
<dbReference type="OrthoDB" id="9802424at2"/>
<dbReference type="PhylomeDB" id="P39407"/>
<dbReference type="BioCyc" id="EcoCyc:G7951-MONOMER"/>
<dbReference type="PRO" id="PR:P39407"/>
<dbReference type="Proteomes" id="UP000000625">
    <property type="component" value="Chromosome"/>
</dbReference>
<dbReference type="GO" id="GO:0016787">
    <property type="term" value="F:hydrolase activity"/>
    <property type="evidence" value="ECO:0007669"/>
    <property type="project" value="UniProtKB-KW"/>
</dbReference>
<dbReference type="GO" id="GO:0006974">
    <property type="term" value="P:DNA damage response"/>
    <property type="evidence" value="ECO:0000270"/>
    <property type="project" value="EcoliWiki"/>
</dbReference>
<dbReference type="GO" id="GO:0016042">
    <property type="term" value="P:lipid catabolic process"/>
    <property type="evidence" value="ECO:0007669"/>
    <property type="project" value="UniProtKB-KW"/>
</dbReference>
<dbReference type="CDD" id="cd07208">
    <property type="entry name" value="Pat_hypo_Ecoli_yjju_like"/>
    <property type="match status" value="1"/>
</dbReference>
<dbReference type="FunFam" id="3.40.1090.10:FF:000008">
    <property type="entry name" value="Phospholipase, patatin family"/>
    <property type="match status" value="1"/>
</dbReference>
<dbReference type="FunFam" id="3.40.1090.10:FF:000011">
    <property type="entry name" value="Phospholipase, patatin family"/>
    <property type="match status" value="1"/>
</dbReference>
<dbReference type="Gene3D" id="3.40.1090.10">
    <property type="entry name" value="Cytosolic phospholipase A2 catalytic domain"/>
    <property type="match status" value="2"/>
</dbReference>
<dbReference type="InterPro" id="IPR016035">
    <property type="entry name" value="Acyl_Trfase/lysoPLipase"/>
</dbReference>
<dbReference type="InterPro" id="IPR045943">
    <property type="entry name" value="DUF6363"/>
</dbReference>
<dbReference type="InterPro" id="IPR050301">
    <property type="entry name" value="NTE"/>
</dbReference>
<dbReference type="InterPro" id="IPR002641">
    <property type="entry name" value="PNPLA_dom"/>
</dbReference>
<dbReference type="InterPro" id="IPR037483">
    <property type="entry name" value="YjjU-like"/>
</dbReference>
<dbReference type="PANTHER" id="PTHR14226">
    <property type="entry name" value="NEUROPATHY TARGET ESTERASE/SWISS CHEESE D.MELANOGASTER"/>
    <property type="match status" value="1"/>
</dbReference>
<dbReference type="PANTHER" id="PTHR14226:SF25">
    <property type="entry name" value="PHOSPHOESTERASE"/>
    <property type="match status" value="1"/>
</dbReference>
<dbReference type="Pfam" id="PF19890">
    <property type="entry name" value="DUF6363"/>
    <property type="match status" value="1"/>
</dbReference>
<dbReference type="Pfam" id="PF01734">
    <property type="entry name" value="Patatin"/>
    <property type="match status" value="1"/>
</dbReference>
<dbReference type="SUPFAM" id="SSF52151">
    <property type="entry name" value="FabD/lysophospholipase-like"/>
    <property type="match status" value="1"/>
</dbReference>
<dbReference type="PROSITE" id="PS51635">
    <property type="entry name" value="PNPLA"/>
    <property type="match status" value="1"/>
</dbReference>